<evidence type="ECO:0000255" key="1">
    <source>
        <dbReference type="HAMAP-Rule" id="MF_00255"/>
    </source>
</evidence>
<dbReference type="EC" id="6.1.1.14" evidence="1"/>
<dbReference type="EMBL" id="CP001120">
    <property type="protein sequence ID" value="ACF67447.1"/>
    <property type="molecule type" value="Genomic_DNA"/>
</dbReference>
<dbReference type="RefSeq" id="WP_001291736.1">
    <property type="nucleotide sequence ID" value="NC_011083.1"/>
</dbReference>
<dbReference type="SMR" id="B4T945"/>
<dbReference type="KEGG" id="seh:SeHA_C3977"/>
<dbReference type="HOGENOM" id="CLU_007220_2_2_6"/>
<dbReference type="Proteomes" id="UP000001866">
    <property type="component" value="Chromosome"/>
</dbReference>
<dbReference type="GO" id="GO:0005829">
    <property type="term" value="C:cytosol"/>
    <property type="evidence" value="ECO:0007669"/>
    <property type="project" value="TreeGrafter"/>
</dbReference>
<dbReference type="GO" id="GO:0004814">
    <property type="term" value="F:arginine-tRNA ligase activity"/>
    <property type="evidence" value="ECO:0007669"/>
    <property type="project" value="InterPro"/>
</dbReference>
<dbReference type="GO" id="GO:0005524">
    <property type="term" value="F:ATP binding"/>
    <property type="evidence" value="ECO:0007669"/>
    <property type="project" value="UniProtKB-UniRule"/>
</dbReference>
<dbReference type="GO" id="GO:0004820">
    <property type="term" value="F:glycine-tRNA ligase activity"/>
    <property type="evidence" value="ECO:0007669"/>
    <property type="project" value="UniProtKB-UniRule"/>
</dbReference>
<dbReference type="GO" id="GO:0006420">
    <property type="term" value="P:arginyl-tRNA aminoacylation"/>
    <property type="evidence" value="ECO:0007669"/>
    <property type="project" value="InterPro"/>
</dbReference>
<dbReference type="GO" id="GO:0006426">
    <property type="term" value="P:glycyl-tRNA aminoacylation"/>
    <property type="evidence" value="ECO:0007669"/>
    <property type="project" value="UniProtKB-UniRule"/>
</dbReference>
<dbReference type="HAMAP" id="MF_00255">
    <property type="entry name" value="Gly_tRNA_synth_beta"/>
    <property type="match status" value="1"/>
</dbReference>
<dbReference type="InterPro" id="IPR008909">
    <property type="entry name" value="DALR_anticod-bd"/>
</dbReference>
<dbReference type="InterPro" id="IPR015944">
    <property type="entry name" value="Gly-tRNA-synth_bsu"/>
</dbReference>
<dbReference type="InterPro" id="IPR006194">
    <property type="entry name" value="Gly-tRNA-synth_heterodimer"/>
</dbReference>
<dbReference type="NCBIfam" id="TIGR00211">
    <property type="entry name" value="glyS"/>
    <property type="match status" value="1"/>
</dbReference>
<dbReference type="PANTHER" id="PTHR30075:SF2">
    <property type="entry name" value="GLYCINE--TRNA LIGASE, CHLOROPLASTIC_MITOCHONDRIAL 2"/>
    <property type="match status" value="1"/>
</dbReference>
<dbReference type="PANTHER" id="PTHR30075">
    <property type="entry name" value="GLYCYL-TRNA SYNTHETASE"/>
    <property type="match status" value="1"/>
</dbReference>
<dbReference type="Pfam" id="PF05746">
    <property type="entry name" value="DALR_1"/>
    <property type="match status" value="1"/>
</dbReference>
<dbReference type="Pfam" id="PF02092">
    <property type="entry name" value="tRNA_synt_2f"/>
    <property type="match status" value="1"/>
</dbReference>
<dbReference type="PRINTS" id="PR01045">
    <property type="entry name" value="TRNASYNTHGB"/>
</dbReference>
<dbReference type="SUPFAM" id="SSF109604">
    <property type="entry name" value="HD-domain/PDEase-like"/>
    <property type="match status" value="1"/>
</dbReference>
<dbReference type="PROSITE" id="PS50861">
    <property type="entry name" value="AA_TRNA_LIGASE_II_GLYAB"/>
    <property type="match status" value="1"/>
</dbReference>
<gene>
    <name evidence="1" type="primary">glyS</name>
    <name type="ordered locus">SeHA_C3977</name>
</gene>
<accession>B4T945</accession>
<feature type="chain" id="PRO_1000101335" description="Glycine--tRNA ligase beta subunit">
    <location>
        <begin position="1"/>
        <end position="689"/>
    </location>
</feature>
<sequence length="689" mass="76453">MSEKTFLVEIGTEELPPKALRSLAESFAANFTAELDNAGLAHGNVEWFAAPRRLALKVANLAESQPDREVEKRGPAIAQAFDAEGKPSKAAEGWARGCGITVDQAERLKTDKGEWLLYRAHVKGESTEALVPNMVATSLAKLPIPKLMRWGASDVHFVRPVHTVTLLLGDKVIPATILGIQSDRVIRGHRFMGEPEFTIDNADQYPQILLERGKVIADYEARKAKIKADAEEAARKIGGNADLSESLLEEVASLVEWPVVLTAKFEEKFLAVPAEALVYTMKGDQKYFPVYDNAGKLLPNFIFVANIESKDPTQIISGNEKVVRPRLADAEFFFNTDRKKRLEDHLPRLQTVLFQQQLGTLRDKTDRIQALAGWIAGQIGADVNHATRAGLLSKCDLMTNMVFEFTDTQGVMGMHYARHDGEAEDVAVALNEQYQPRFAGDDLPSNPVACALAIADKMDTLAGIFGIGQHPKGDKDPFALRRAALGVLRIIVEKNLALDLQTLTEEAVRLYGDKLTNANVVDDVIDFMLGRFRAWYQDEGYTVDTIQAVLARRPTRPADFDARMKAVSHFRTLEEASALAAANKRVSNILAKATEPLNDIVHASVLKEAAEIELARHLVVLRDKLQPYFADGRYQEALIELAALRAPVDEFFENVMVNAEEKDIRINRLTLLSKLRELFLQVADISLLQ</sequence>
<proteinExistence type="inferred from homology"/>
<name>SYGB_SALHS</name>
<organism>
    <name type="scientific">Salmonella heidelberg (strain SL476)</name>
    <dbReference type="NCBI Taxonomy" id="454169"/>
    <lineage>
        <taxon>Bacteria</taxon>
        <taxon>Pseudomonadati</taxon>
        <taxon>Pseudomonadota</taxon>
        <taxon>Gammaproteobacteria</taxon>
        <taxon>Enterobacterales</taxon>
        <taxon>Enterobacteriaceae</taxon>
        <taxon>Salmonella</taxon>
    </lineage>
</organism>
<keyword id="KW-0030">Aminoacyl-tRNA synthetase</keyword>
<keyword id="KW-0067">ATP-binding</keyword>
<keyword id="KW-0963">Cytoplasm</keyword>
<keyword id="KW-0436">Ligase</keyword>
<keyword id="KW-0547">Nucleotide-binding</keyword>
<keyword id="KW-0648">Protein biosynthesis</keyword>
<reference key="1">
    <citation type="journal article" date="2011" name="J. Bacteriol.">
        <title>Comparative genomics of 28 Salmonella enterica isolates: evidence for CRISPR-mediated adaptive sublineage evolution.</title>
        <authorList>
            <person name="Fricke W.F."/>
            <person name="Mammel M.K."/>
            <person name="McDermott P.F."/>
            <person name="Tartera C."/>
            <person name="White D.G."/>
            <person name="Leclerc J.E."/>
            <person name="Ravel J."/>
            <person name="Cebula T.A."/>
        </authorList>
    </citation>
    <scope>NUCLEOTIDE SEQUENCE [LARGE SCALE GENOMIC DNA]</scope>
    <source>
        <strain>SL476</strain>
    </source>
</reference>
<comment type="catalytic activity">
    <reaction evidence="1">
        <text>tRNA(Gly) + glycine + ATP = glycyl-tRNA(Gly) + AMP + diphosphate</text>
        <dbReference type="Rhea" id="RHEA:16013"/>
        <dbReference type="Rhea" id="RHEA-COMP:9664"/>
        <dbReference type="Rhea" id="RHEA-COMP:9683"/>
        <dbReference type="ChEBI" id="CHEBI:30616"/>
        <dbReference type="ChEBI" id="CHEBI:33019"/>
        <dbReference type="ChEBI" id="CHEBI:57305"/>
        <dbReference type="ChEBI" id="CHEBI:78442"/>
        <dbReference type="ChEBI" id="CHEBI:78522"/>
        <dbReference type="ChEBI" id="CHEBI:456215"/>
        <dbReference type="EC" id="6.1.1.14"/>
    </reaction>
</comment>
<comment type="subunit">
    <text evidence="1">Tetramer of two alpha and two beta subunits.</text>
</comment>
<comment type="subcellular location">
    <subcellularLocation>
        <location evidence="1">Cytoplasm</location>
    </subcellularLocation>
</comment>
<comment type="similarity">
    <text evidence="1">Belongs to the class-II aminoacyl-tRNA synthetase family.</text>
</comment>
<protein>
    <recommendedName>
        <fullName evidence="1">Glycine--tRNA ligase beta subunit</fullName>
        <ecNumber evidence="1">6.1.1.14</ecNumber>
    </recommendedName>
    <alternativeName>
        <fullName evidence="1">Glycyl-tRNA synthetase beta subunit</fullName>
        <shortName evidence="1">GlyRS</shortName>
    </alternativeName>
</protein>